<evidence type="ECO:0000255" key="1">
    <source>
        <dbReference type="HAMAP-Rule" id="MF_01884"/>
    </source>
</evidence>
<evidence type="ECO:0000255" key="2">
    <source>
        <dbReference type="PROSITE-ProRule" id="PRU01203"/>
    </source>
</evidence>
<evidence type="ECO:0000256" key="3">
    <source>
        <dbReference type="SAM" id="MobiDB-lite"/>
    </source>
</evidence>
<evidence type="ECO:0000305" key="4"/>
<gene>
    <name evidence="1" type="primary">rho</name>
    <name type="ordered locus">Fisuc_2428</name>
    <name type="ordered locus">FSU_2991</name>
</gene>
<comment type="function">
    <text evidence="1">Facilitates transcription termination by a mechanism that involves Rho binding to the nascent RNA, activation of Rho's RNA-dependent ATPase activity, and release of the mRNA from the DNA template.</text>
</comment>
<comment type="subunit">
    <text evidence="1">Homohexamer. The homohexamer assembles into an open ring structure.</text>
</comment>
<comment type="similarity">
    <text evidence="1">Belongs to the Rho family.</text>
</comment>
<comment type="sequence caution" evidence="4">
    <conflict type="erroneous initiation">
        <sequence resource="EMBL-CDS" id="ADL26535"/>
    </conflict>
    <text>Truncated N-terminus.</text>
</comment>
<dbReference type="EC" id="3.6.4.-" evidence="1"/>
<dbReference type="EMBL" id="CP001792">
    <property type="protein sequence ID" value="ACX76014.1"/>
    <property type="molecule type" value="Genomic_DNA"/>
</dbReference>
<dbReference type="EMBL" id="CP002158">
    <property type="protein sequence ID" value="ADL26535.1"/>
    <property type="status" value="ALT_INIT"/>
    <property type="molecule type" value="Genomic_DNA"/>
</dbReference>
<dbReference type="RefSeq" id="WP_015732300.1">
    <property type="nucleotide sequence ID" value="NC_017448.1"/>
</dbReference>
<dbReference type="SMR" id="C9RLJ9"/>
<dbReference type="STRING" id="59374.FSU_2991"/>
<dbReference type="KEGG" id="fsc:FSU_2991"/>
<dbReference type="KEGG" id="fsu:Fisuc_2428"/>
<dbReference type="PATRIC" id="fig|59374.8.peg.2862"/>
<dbReference type="eggNOG" id="COG1158">
    <property type="taxonomic scope" value="Bacteria"/>
</dbReference>
<dbReference type="HOGENOM" id="CLU_016377_4_3_0"/>
<dbReference type="Proteomes" id="UP000000517">
    <property type="component" value="Chromosome"/>
</dbReference>
<dbReference type="GO" id="GO:0005524">
    <property type="term" value="F:ATP binding"/>
    <property type="evidence" value="ECO:0007669"/>
    <property type="project" value="UniProtKB-UniRule"/>
</dbReference>
<dbReference type="GO" id="GO:0016887">
    <property type="term" value="F:ATP hydrolysis activity"/>
    <property type="evidence" value="ECO:0007669"/>
    <property type="project" value="InterPro"/>
</dbReference>
<dbReference type="GO" id="GO:0008186">
    <property type="term" value="F:ATP-dependent activity, acting on RNA"/>
    <property type="evidence" value="ECO:0007669"/>
    <property type="project" value="InterPro"/>
</dbReference>
<dbReference type="GO" id="GO:0004386">
    <property type="term" value="F:helicase activity"/>
    <property type="evidence" value="ECO:0007669"/>
    <property type="project" value="UniProtKB-UniRule"/>
</dbReference>
<dbReference type="GO" id="GO:0003723">
    <property type="term" value="F:RNA binding"/>
    <property type="evidence" value="ECO:0007669"/>
    <property type="project" value="UniProtKB-UniRule"/>
</dbReference>
<dbReference type="GO" id="GO:0006353">
    <property type="term" value="P:DNA-templated transcription termination"/>
    <property type="evidence" value="ECO:0007669"/>
    <property type="project" value="UniProtKB-UniRule"/>
</dbReference>
<dbReference type="CDD" id="cd04459">
    <property type="entry name" value="Rho_CSD"/>
    <property type="match status" value="1"/>
</dbReference>
<dbReference type="CDD" id="cd01128">
    <property type="entry name" value="rho_factor_C"/>
    <property type="match status" value="1"/>
</dbReference>
<dbReference type="Gene3D" id="2.40.50.140">
    <property type="entry name" value="Nucleic acid-binding proteins"/>
    <property type="match status" value="1"/>
</dbReference>
<dbReference type="Gene3D" id="3.40.50.300">
    <property type="entry name" value="P-loop containing nucleotide triphosphate hydrolases"/>
    <property type="match status" value="1"/>
</dbReference>
<dbReference type="HAMAP" id="MF_01884">
    <property type="entry name" value="Rho"/>
    <property type="match status" value="1"/>
</dbReference>
<dbReference type="InterPro" id="IPR003593">
    <property type="entry name" value="AAA+_ATPase"/>
</dbReference>
<dbReference type="InterPro" id="IPR000194">
    <property type="entry name" value="ATPase_F1/V1/A1_a/bsu_nucl-bd"/>
</dbReference>
<dbReference type="InterPro" id="IPR011129">
    <property type="entry name" value="CSD"/>
</dbReference>
<dbReference type="InterPro" id="IPR012340">
    <property type="entry name" value="NA-bd_OB-fold"/>
</dbReference>
<dbReference type="InterPro" id="IPR027417">
    <property type="entry name" value="P-loop_NTPase"/>
</dbReference>
<dbReference type="InterPro" id="IPR041703">
    <property type="entry name" value="Rho_factor_ATP-bd"/>
</dbReference>
<dbReference type="InterPro" id="IPR011113">
    <property type="entry name" value="Rho_RNA-bd"/>
</dbReference>
<dbReference type="InterPro" id="IPR004665">
    <property type="entry name" value="Term_rho"/>
</dbReference>
<dbReference type="NCBIfam" id="NF006886">
    <property type="entry name" value="PRK09376.1"/>
    <property type="match status" value="1"/>
</dbReference>
<dbReference type="NCBIfam" id="TIGR00767">
    <property type="entry name" value="rho"/>
    <property type="match status" value="1"/>
</dbReference>
<dbReference type="PANTHER" id="PTHR46425">
    <property type="entry name" value="TRANSCRIPTION TERMINATION FACTOR RHO"/>
    <property type="match status" value="1"/>
</dbReference>
<dbReference type="PANTHER" id="PTHR46425:SF1">
    <property type="entry name" value="TRANSCRIPTION TERMINATION FACTOR RHO"/>
    <property type="match status" value="1"/>
</dbReference>
<dbReference type="Pfam" id="PF00006">
    <property type="entry name" value="ATP-synt_ab"/>
    <property type="match status" value="1"/>
</dbReference>
<dbReference type="Pfam" id="PF07497">
    <property type="entry name" value="Rho_RNA_bind"/>
    <property type="match status" value="1"/>
</dbReference>
<dbReference type="SMART" id="SM00382">
    <property type="entry name" value="AAA"/>
    <property type="match status" value="1"/>
</dbReference>
<dbReference type="SMART" id="SM00357">
    <property type="entry name" value="CSP"/>
    <property type="match status" value="1"/>
</dbReference>
<dbReference type="SUPFAM" id="SSF50249">
    <property type="entry name" value="Nucleic acid-binding proteins"/>
    <property type="match status" value="1"/>
</dbReference>
<dbReference type="SUPFAM" id="SSF52540">
    <property type="entry name" value="P-loop containing nucleoside triphosphate hydrolases"/>
    <property type="match status" value="1"/>
</dbReference>
<dbReference type="PROSITE" id="PS51856">
    <property type="entry name" value="RHO_RNA_BD"/>
    <property type="match status" value="1"/>
</dbReference>
<keyword id="KW-0067">ATP-binding</keyword>
<keyword id="KW-0347">Helicase</keyword>
<keyword id="KW-0378">Hydrolase</keyword>
<keyword id="KW-0547">Nucleotide-binding</keyword>
<keyword id="KW-0694">RNA-binding</keyword>
<keyword id="KW-0804">Transcription</keyword>
<keyword id="KW-0805">Transcription regulation</keyword>
<keyword id="KW-0806">Transcription termination</keyword>
<organism>
    <name type="scientific">Fibrobacter succinogenes (strain ATCC 19169 / S85)</name>
    <dbReference type="NCBI Taxonomy" id="59374"/>
    <lineage>
        <taxon>Bacteria</taxon>
        <taxon>Pseudomonadati</taxon>
        <taxon>Fibrobacterota</taxon>
        <taxon>Fibrobacteria</taxon>
        <taxon>Fibrobacterales</taxon>
        <taxon>Fibrobacteraceae</taxon>
        <taxon>Fibrobacter</taxon>
    </lineage>
</organism>
<protein>
    <recommendedName>
        <fullName evidence="1">Transcription termination factor Rho</fullName>
        <ecNumber evidence="1">3.6.4.-</ecNumber>
    </recommendedName>
    <alternativeName>
        <fullName evidence="1">ATP-dependent helicase Rho</fullName>
    </alternativeName>
</protein>
<accession>C9RLJ9</accession>
<accession>D9S7L5</accession>
<feature type="chain" id="PRO_0000398668" description="Transcription termination factor Rho">
    <location>
        <begin position="1"/>
        <end position="689"/>
    </location>
</feature>
<feature type="domain" description="Rho RNA-BD" evidence="2">
    <location>
        <begin position="287"/>
        <end position="362"/>
    </location>
</feature>
<feature type="region of interest" description="Disordered" evidence="3">
    <location>
        <begin position="1"/>
        <end position="90"/>
    </location>
</feature>
<feature type="region of interest" description="Disordered" evidence="3">
    <location>
        <begin position="151"/>
        <end position="213"/>
    </location>
</feature>
<feature type="compositionally biased region" description="Polar residues" evidence="3">
    <location>
        <begin position="1"/>
        <end position="20"/>
    </location>
</feature>
<feature type="compositionally biased region" description="Basic residues" evidence="3">
    <location>
        <begin position="52"/>
        <end position="65"/>
    </location>
</feature>
<feature type="compositionally biased region" description="Low complexity" evidence="3">
    <location>
        <begin position="170"/>
        <end position="183"/>
    </location>
</feature>
<feature type="compositionally biased region" description="Low complexity" evidence="3">
    <location>
        <begin position="191"/>
        <end position="213"/>
    </location>
</feature>
<feature type="binding site" evidence="1">
    <location>
        <begin position="405"/>
        <end position="410"/>
    </location>
    <ligand>
        <name>ATP</name>
        <dbReference type="ChEBI" id="CHEBI:30616"/>
    </ligand>
</feature>
<feature type="binding site" evidence="1">
    <location>
        <begin position="417"/>
        <end position="422"/>
    </location>
    <ligand>
        <name>ATP</name>
        <dbReference type="ChEBI" id="CHEBI:30616"/>
    </ligand>
</feature>
<feature type="binding site" evidence="1">
    <location>
        <position position="448"/>
    </location>
    <ligand>
        <name>ATP</name>
        <dbReference type="ChEBI" id="CHEBI:30616"/>
    </ligand>
</feature>
<sequence>MPRTPKNQNLEQNTQTQSLTDLVYPESTGIPVPEYLGTVDKLPDNTEEVPQPKRRGRKPNPKTKARKEPALEQNVQAETEPEFQEKKQPVDGIAAAEKRLAEQYGVANIDAIAEPIYTGEQNYKPAESTEENAFVSENTSEAVIPQNGDMAQAQAENQGEVATDQNADPNAQQQGEAQAQNGEGQDDRRFNNQNGKFNKFNKNNKFNKNNRNNRNFQQQEEFVDDSATLPAPGSEAILKAKENWLKFRKLSMSELQELAVQKEVDFRRMRKQSLNYILQSLENEGNIIYTEGVLEVTPQGHGFLRMPDQNYQTSADDVYVSQNLIRKFNLKIGDTIEGLVRTPRDQDKYFSMRRIDRVNFEEPDKMRRRVAFEYLTPIHPEEKIHLEWNETEYSTRIMDLFSPIGKGQRSIILAPPRTGKTVLLQNVTRAIAKNHPEIILITLLIDERPEEVTEMRDIITDIKEKAAEKGIEIKAEVVASTFDEPPEHHTRVANMVLEKAKRLVESQKDVVILLDSITRFARANNVVIPHSGKILSGGVDANAMQFPKKFFGAARKIQDKIRTVKNEDGTISEEVQKNGSLTIIGTALIETGSRMDEVIFEEFKGTGNMELVLDRRIAEKRIWPAIDVFKSGTRKEERLLTLLEQNAAWNFRRGSQNETETGIMENLLKLMSKLKTNAELLAVLSKPKV</sequence>
<proteinExistence type="inferred from homology"/>
<reference key="1">
    <citation type="submission" date="2009-10" db="EMBL/GenBank/DDBJ databases">
        <title>Complete sequence of Fibrobacter succinogenes subsp. succinogenes S85.</title>
        <authorList>
            <consortium name="US DOE Joint Genome Institute"/>
            <person name="Lucas S."/>
            <person name="Copeland A."/>
            <person name="Lapidus A."/>
            <person name="Glavina del Rio T."/>
            <person name="Tice H."/>
            <person name="Bruce D."/>
            <person name="Goodwin L."/>
            <person name="Pitluck S."/>
            <person name="Chertkov O."/>
            <person name="Detter J.C."/>
            <person name="Han C."/>
            <person name="Tapia R."/>
            <person name="Larimer F."/>
            <person name="Land M."/>
            <person name="Hauser L."/>
            <person name="Kyrpides N."/>
            <person name="Mikhailova N."/>
            <person name="Weimer P.J."/>
            <person name="Stevenson D.M."/>
            <person name="Boyum J."/>
            <person name="Brumm P.I."/>
            <person name="Mead D."/>
        </authorList>
    </citation>
    <scope>NUCLEOTIDE SEQUENCE [LARGE SCALE GENOMIC DNA]</scope>
    <source>
        <strain>ATCC 19169 / S85</strain>
    </source>
</reference>
<reference key="2">
    <citation type="submission" date="2010-08" db="EMBL/GenBank/DDBJ databases">
        <title>Complete sequence of Fibrobacter succinogenes subsp. succinogenes S85.</title>
        <authorList>
            <person name="Durkin A.S."/>
            <person name="Nelson K.E."/>
            <person name="Morrison M."/>
            <person name="Forsberg C.W."/>
            <person name="Wilson D.B."/>
            <person name="Russell J.B."/>
            <person name="Cann I.K.O."/>
            <person name="Mackie R.I."/>
            <person name="White B.A."/>
        </authorList>
    </citation>
    <scope>NUCLEOTIDE SEQUENCE [LARGE SCALE GENOMIC DNA]</scope>
    <source>
        <strain>ATCC 19169 / S85</strain>
    </source>
</reference>
<name>RHO_FIBSS</name>